<sequence length="476" mass="52878">MATKLESFKVVEKLGVEKGEKGKMMSKKKNVKKDGDESESGFWFRFKFIFSCISSRSKVDSSMNATAVIAEPKKVIEKLEGHPAPTKDTGCAESGSSTPLMSGELKYSSKLRIFMFNDLKLATRNFRPESLLGEGGFGCVFKGWIEENGTAPVKPGTGLTVAVKTLNPDGLQGHKEWLAEINFLGNLVHPSLVKLVGYCMEEDQRLLVYEFMPRGSLENHLFRRTLPLPWSVRMKIALGAAKGLAFLHEEAEKPVIYRDFKTSNILLDGEYNAKLSDFGLAKDAPDEKKSHVSTRVMGTYGYAAPEYVMTGHLTTKSDVYSFGVVLLEILTGRRSVDKSRPNGEQNLVEWVRPHLLDKKRFYRLLDPRLEGHYSIKGAQKATQVAAQCLNRDSKARPKMSEVVEALKPLPNLKDFASSSSSFQTMQPVAKNGVRTQGGGFVSRNGPPMRSLSSLNLPQASPYRYARQSPKPKGKEP</sequence>
<gene>
    <name evidence="7" type="primary">PBL36</name>
    <name evidence="9" type="ordered locus">At3g28690</name>
</gene>
<keyword id="KW-0067">ATP-binding</keyword>
<keyword id="KW-1003">Cell membrane</keyword>
<keyword id="KW-0418">Kinase</keyword>
<keyword id="KW-0449">Lipoprotein</keyword>
<keyword id="KW-0472">Membrane</keyword>
<keyword id="KW-0547">Nucleotide-binding</keyword>
<keyword id="KW-0597">Phosphoprotein</keyword>
<keyword id="KW-0611">Plant defense</keyword>
<keyword id="KW-1185">Reference proteome</keyword>
<keyword id="KW-0723">Serine/threonine-protein kinase</keyword>
<keyword id="KW-0808">Transferase</keyword>
<comment type="function">
    <text evidence="5 6">Involved in chitin-triggered immune signaling and is required for reactive oxygen species (ROS) production (PubMed:29907700). Acts downstream of SD129 in defense signaling triggered by the pathogen-associated molecular pattern (PAMP) 3-OH-C10:0, a medium-chain 3-hydroxy fatty acid (PubMed:31922267).</text>
</comment>
<comment type="catalytic activity">
    <reaction evidence="2">
        <text>L-seryl-[protein] + ATP = O-phospho-L-seryl-[protein] + ADP + H(+)</text>
        <dbReference type="Rhea" id="RHEA:17989"/>
        <dbReference type="Rhea" id="RHEA-COMP:9863"/>
        <dbReference type="Rhea" id="RHEA-COMP:11604"/>
        <dbReference type="ChEBI" id="CHEBI:15378"/>
        <dbReference type="ChEBI" id="CHEBI:29999"/>
        <dbReference type="ChEBI" id="CHEBI:30616"/>
        <dbReference type="ChEBI" id="CHEBI:83421"/>
        <dbReference type="ChEBI" id="CHEBI:456216"/>
        <dbReference type="EC" id="2.7.11.1"/>
    </reaction>
    <physiologicalReaction direction="left-to-right" evidence="2">
        <dbReference type="Rhea" id="RHEA:17990"/>
    </physiologicalReaction>
</comment>
<comment type="catalytic activity">
    <reaction evidence="2">
        <text>L-threonyl-[protein] + ATP = O-phospho-L-threonyl-[protein] + ADP + H(+)</text>
        <dbReference type="Rhea" id="RHEA:46608"/>
        <dbReference type="Rhea" id="RHEA-COMP:11060"/>
        <dbReference type="Rhea" id="RHEA-COMP:11605"/>
        <dbReference type="ChEBI" id="CHEBI:15378"/>
        <dbReference type="ChEBI" id="CHEBI:30013"/>
        <dbReference type="ChEBI" id="CHEBI:30616"/>
        <dbReference type="ChEBI" id="CHEBI:61977"/>
        <dbReference type="ChEBI" id="CHEBI:456216"/>
        <dbReference type="EC" id="2.7.11.1"/>
    </reaction>
    <physiologicalReaction direction="left-to-right" evidence="2">
        <dbReference type="Rhea" id="RHEA:46609"/>
    </physiologicalReaction>
</comment>
<comment type="subunit">
    <text evidence="6">Interacts with SD129.</text>
</comment>
<comment type="subcellular location">
    <subcellularLocation>
        <location evidence="6">Cell membrane</location>
        <topology evidence="1">Lipid-anchor</topology>
    </subcellularLocation>
</comment>
<comment type="PTM">
    <text evidence="6">Phosphorylated by SD129 in response to the pathogen-associated molecular pattern (PAMP) 3-OH-C10:0, a medium-chain 3-hydroxy fatty acid.</text>
</comment>
<comment type="similarity">
    <text evidence="3">Belongs to the protein kinase superfamily. Ser/Thr protein kinase family.</text>
</comment>
<comment type="sequence caution" evidence="8">
    <conflict type="erroneous gene model prediction">
        <sequence resource="EMBL-CDS" id="AEE77475"/>
    </conflict>
</comment>
<dbReference type="EC" id="2.7.11.1" evidence="2"/>
<dbReference type="EMBL" id="AP000420">
    <property type="status" value="NOT_ANNOTATED_CDS"/>
    <property type="molecule type" value="Genomic_DNA"/>
</dbReference>
<dbReference type="EMBL" id="CP002686">
    <property type="protein sequence ID" value="AEE77475.1"/>
    <property type="status" value="ALT_SEQ"/>
    <property type="molecule type" value="Genomic_DNA"/>
</dbReference>
<dbReference type="EMBL" id="CP002686">
    <property type="protein sequence ID" value="AEE77476.2"/>
    <property type="molecule type" value="Genomic_DNA"/>
</dbReference>
<dbReference type="EMBL" id="BT033112">
    <property type="protein sequence ID" value="ACF20467.1"/>
    <property type="molecule type" value="mRNA"/>
</dbReference>
<dbReference type="RefSeq" id="NP_001030790.3">
    <property type="nucleotide sequence ID" value="NM_001035713.4"/>
</dbReference>
<dbReference type="RefSeq" id="NP_189510.2">
    <property type="nucleotide sequence ID" value="NM_113789.4"/>
</dbReference>
<dbReference type="SMR" id="F4J0D2"/>
<dbReference type="FunCoup" id="F4J0D2">
    <property type="interactions" value="3931"/>
</dbReference>
<dbReference type="STRING" id="3702.F4J0D2"/>
<dbReference type="iPTMnet" id="F4J0D2"/>
<dbReference type="PaxDb" id="3702-AT3G28690.2"/>
<dbReference type="ProteomicsDB" id="187996"/>
<dbReference type="ProteomicsDB" id="196021"/>
<dbReference type="EnsemblPlants" id="AT3G28690.2">
    <property type="protein sequence ID" value="AT3G28690.2"/>
    <property type="gene ID" value="AT3G28690"/>
</dbReference>
<dbReference type="GeneID" id="822499"/>
<dbReference type="Gramene" id="AT3G28690.2">
    <property type="protein sequence ID" value="AT3G28690.2"/>
    <property type="gene ID" value="AT3G28690"/>
</dbReference>
<dbReference type="KEGG" id="ath:AT3G28690"/>
<dbReference type="Araport" id="AT3G28690"/>
<dbReference type="TAIR" id="AT3G28690">
    <property type="gene designation" value="PBL36"/>
</dbReference>
<dbReference type="eggNOG" id="KOG1187">
    <property type="taxonomic scope" value="Eukaryota"/>
</dbReference>
<dbReference type="HOGENOM" id="CLU_000288_21_4_1"/>
<dbReference type="InParanoid" id="F4J0D2"/>
<dbReference type="OrthoDB" id="4062651at2759"/>
<dbReference type="PRO" id="PR:F4J0D2"/>
<dbReference type="Proteomes" id="UP000006548">
    <property type="component" value="Chromosome 3"/>
</dbReference>
<dbReference type="ExpressionAtlas" id="F4J0D2">
    <property type="expression patterns" value="baseline and differential"/>
</dbReference>
<dbReference type="GO" id="GO:0005886">
    <property type="term" value="C:plasma membrane"/>
    <property type="evidence" value="ECO:0000314"/>
    <property type="project" value="UniProtKB"/>
</dbReference>
<dbReference type="GO" id="GO:0005524">
    <property type="term" value="F:ATP binding"/>
    <property type="evidence" value="ECO:0007669"/>
    <property type="project" value="UniProtKB-KW"/>
</dbReference>
<dbReference type="GO" id="GO:0004674">
    <property type="term" value="F:protein serine/threonine kinase activity"/>
    <property type="evidence" value="ECO:0007669"/>
    <property type="project" value="UniProtKB-KW"/>
</dbReference>
<dbReference type="GO" id="GO:0006952">
    <property type="term" value="P:defense response"/>
    <property type="evidence" value="ECO:0007669"/>
    <property type="project" value="UniProtKB-KW"/>
</dbReference>
<dbReference type="GO" id="GO:0031663">
    <property type="term" value="P:lipopolysaccharide-mediated signaling pathway"/>
    <property type="evidence" value="ECO:0000314"/>
    <property type="project" value="UniProtKB"/>
</dbReference>
<dbReference type="GO" id="GO:0002221">
    <property type="term" value="P:pattern recognition receptor signaling pathway"/>
    <property type="evidence" value="ECO:0000314"/>
    <property type="project" value="UniProtKB"/>
</dbReference>
<dbReference type="CDD" id="cd14066">
    <property type="entry name" value="STKc_IRAK"/>
    <property type="match status" value="1"/>
</dbReference>
<dbReference type="FunFam" id="1.10.510.10:FF:000258">
    <property type="entry name" value="Probable serine/threonine-protein kinase PBL8"/>
    <property type="match status" value="1"/>
</dbReference>
<dbReference type="FunFam" id="3.30.200.20:FF:000228">
    <property type="entry name" value="Serine/threonine-protein kinase BIK1"/>
    <property type="match status" value="1"/>
</dbReference>
<dbReference type="Gene3D" id="3.30.200.20">
    <property type="entry name" value="Phosphorylase Kinase, domain 1"/>
    <property type="match status" value="1"/>
</dbReference>
<dbReference type="Gene3D" id="1.10.510.10">
    <property type="entry name" value="Transferase(Phosphotransferase) domain 1"/>
    <property type="match status" value="1"/>
</dbReference>
<dbReference type="InterPro" id="IPR011009">
    <property type="entry name" value="Kinase-like_dom_sf"/>
</dbReference>
<dbReference type="InterPro" id="IPR050823">
    <property type="entry name" value="Plant_Ser_Thr_Prot_Kinase"/>
</dbReference>
<dbReference type="InterPro" id="IPR000719">
    <property type="entry name" value="Prot_kinase_dom"/>
</dbReference>
<dbReference type="InterPro" id="IPR017441">
    <property type="entry name" value="Protein_kinase_ATP_BS"/>
</dbReference>
<dbReference type="InterPro" id="IPR001245">
    <property type="entry name" value="Ser-Thr/Tyr_kinase_cat_dom"/>
</dbReference>
<dbReference type="InterPro" id="IPR008271">
    <property type="entry name" value="Ser/Thr_kinase_AS"/>
</dbReference>
<dbReference type="PANTHER" id="PTHR45621">
    <property type="entry name" value="OS01G0588500 PROTEIN-RELATED"/>
    <property type="match status" value="1"/>
</dbReference>
<dbReference type="Pfam" id="PF07714">
    <property type="entry name" value="PK_Tyr_Ser-Thr"/>
    <property type="match status" value="1"/>
</dbReference>
<dbReference type="SUPFAM" id="SSF56112">
    <property type="entry name" value="Protein kinase-like (PK-like)"/>
    <property type="match status" value="1"/>
</dbReference>
<dbReference type="PROSITE" id="PS00107">
    <property type="entry name" value="PROTEIN_KINASE_ATP"/>
    <property type="match status" value="1"/>
</dbReference>
<dbReference type="PROSITE" id="PS50011">
    <property type="entry name" value="PROTEIN_KINASE_DOM"/>
    <property type="match status" value="1"/>
</dbReference>
<dbReference type="PROSITE" id="PS00108">
    <property type="entry name" value="PROTEIN_KINASE_ST"/>
    <property type="match status" value="1"/>
</dbReference>
<reference key="1">
    <citation type="journal article" date="2000" name="DNA Res.">
        <title>Structural analysis of Arabidopsis thaliana chromosome 3. I. Sequence features of the regions of 4,504,864 bp covered by sixty P1 and TAC clones.</title>
        <authorList>
            <person name="Sato S."/>
            <person name="Nakamura Y."/>
            <person name="Kaneko T."/>
            <person name="Katoh T."/>
            <person name="Asamizu E."/>
            <person name="Tabata S."/>
        </authorList>
    </citation>
    <scope>NUCLEOTIDE SEQUENCE [LARGE SCALE GENOMIC DNA]</scope>
    <source>
        <strain>cv. Columbia</strain>
    </source>
</reference>
<reference key="2">
    <citation type="journal article" date="2017" name="Plant J.">
        <title>Araport11: a complete reannotation of the Arabidopsis thaliana reference genome.</title>
        <authorList>
            <person name="Cheng C.Y."/>
            <person name="Krishnakumar V."/>
            <person name="Chan A.P."/>
            <person name="Thibaud-Nissen F."/>
            <person name="Schobel S."/>
            <person name="Town C.D."/>
        </authorList>
    </citation>
    <scope>GENOME REANNOTATION</scope>
    <source>
        <strain>cv. Columbia</strain>
    </source>
</reference>
<reference key="3">
    <citation type="submission" date="2008-07" db="EMBL/GenBank/DDBJ databases">
        <title>Arabidopsis ORF clones.</title>
        <authorList>
            <person name="De Los Reyes C."/>
            <person name="Quan R."/>
            <person name="Chen H."/>
            <person name="Bautista V."/>
            <person name="Kim C.J."/>
            <person name="Ecker J.R."/>
        </authorList>
    </citation>
    <scope>NUCLEOTIDE SEQUENCE [LARGE SCALE MRNA] OF 101-476</scope>
    <source>
        <strain>cv. Columbia</strain>
    </source>
</reference>
<reference key="4">
    <citation type="journal article" date="2009" name="Plant Physiol.">
        <title>Large-scale Arabidopsis phosphoproteome profiling reveals novel chloroplast kinase substrates and phosphorylation networks.</title>
        <authorList>
            <person name="Reiland S."/>
            <person name="Messerli G."/>
            <person name="Baerenfaller K."/>
            <person name="Gerrits B."/>
            <person name="Endler A."/>
            <person name="Grossmann J."/>
            <person name="Gruissem W."/>
            <person name="Baginsky S."/>
        </authorList>
    </citation>
    <scope>IDENTIFICATION BY MASS SPECTROMETRY [LARGE SCALE ANALYSIS]</scope>
</reference>
<reference key="5">
    <citation type="journal article" date="2018" name="Plant Physiol.">
        <title>Roles of receptor-like cytoplasmic kinase VII members in pattern-triggered immune signaling.</title>
        <authorList>
            <person name="Rao S."/>
            <person name="Zhou Z."/>
            <person name="Miao P."/>
            <person name="Bi G."/>
            <person name="Hu M."/>
            <person name="Wu Y."/>
            <person name="Feng F."/>
            <person name="Zhang X."/>
            <person name="Zhou J.M."/>
        </authorList>
    </citation>
    <scope>FUNCTION</scope>
    <scope>GENE FAMILY</scope>
    <scope>NOMENCLATURE</scope>
</reference>
<reference key="6">
    <citation type="journal article" date="2020" name="EMBO J.">
        <title>Tyrosine phosphorylation of the lectin receptor-like kinase LORE regulates plant immunity.</title>
        <authorList>
            <person name="Luo X."/>
            <person name="Wu W."/>
            <person name="Liang Y."/>
            <person name="Xu N."/>
            <person name="Wang Z."/>
            <person name="Zou H."/>
            <person name="Liu J."/>
        </authorList>
    </citation>
    <scope>FUNCTION</scope>
    <scope>INTERACTION WITH SD129</scope>
    <scope>SUBCELLULAR LOCATION</scope>
    <scope>PHOSPHORYLATION</scope>
</reference>
<organism>
    <name type="scientific">Arabidopsis thaliana</name>
    <name type="common">Mouse-ear cress</name>
    <dbReference type="NCBI Taxonomy" id="3702"/>
    <lineage>
        <taxon>Eukaryota</taxon>
        <taxon>Viridiplantae</taxon>
        <taxon>Streptophyta</taxon>
        <taxon>Embryophyta</taxon>
        <taxon>Tracheophyta</taxon>
        <taxon>Spermatophyta</taxon>
        <taxon>Magnoliopsida</taxon>
        <taxon>eudicotyledons</taxon>
        <taxon>Gunneridae</taxon>
        <taxon>Pentapetalae</taxon>
        <taxon>rosids</taxon>
        <taxon>malvids</taxon>
        <taxon>Brassicales</taxon>
        <taxon>Brassicaceae</taxon>
        <taxon>Camelineae</taxon>
        <taxon>Arabidopsis</taxon>
    </lineage>
</organism>
<protein>
    <recommendedName>
        <fullName evidence="7">Serine/threonine-protein kinase PBL36</fullName>
        <ecNumber evidence="2">2.7.11.1</ecNumber>
    </recommendedName>
    <alternativeName>
        <fullName evidence="7">PBS1-like protein 36</fullName>
    </alternativeName>
    <alternativeName>
        <fullName evidence="7">Receptor-like cytoplasmic kinase PBL36</fullName>
    </alternativeName>
</protein>
<feature type="chain" id="PRO_0000452692" description="Serine/threonine-protein kinase PBL36">
    <location>
        <begin position="1"/>
        <end position="476"/>
    </location>
</feature>
<feature type="domain" description="Protein kinase" evidence="3">
    <location>
        <begin position="126"/>
        <end position="412"/>
    </location>
</feature>
<feature type="region of interest" description="Disordered" evidence="4">
    <location>
        <begin position="431"/>
        <end position="476"/>
    </location>
</feature>
<feature type="active site" description="Proton acceptor" evidence="3">
    <location>
        <position position="259"/>
    </location>
</feature>
<feature type="binding site" evidence="3">
    <location>
        <begin position="132"/>
        <end position="140"/>
    </location>
    <ligand>
        <name>ATP</name>
        <dbReference type="ChEBI" id="CHEBI:30616"/>
    </ligand>
</feature>
<feature type="binding site" evidence="3">
    <location>
        <position position="164"/>
    </location>
    <ligand>
        <name>ATP</name>
        <dbReference type="ChEBI" id="CHEBI:30616"/>
    </ligand>
</feature>
<feature type="modified residue" description="Phosphotyrosine" evidence="1">
    <location>
        <position position="209"/>
    </location>
</feature>
<feature type="modified residue" description="Phosphoserine" evidence="1">
    <location>
        <position position="263"/>
    </location>
</feature>
<feature type="modified residue" description="Phosphoserine" evidence="1">
    <location>
        <position position="293"/>
    </location>
</feature>
<feature type="modified residue" description="Phosphothreonine" evidence="1">
    <location>
        <position position="294"/>
    </location>
</feature>
<feature type="modified residue" description="Phosphothreonine" evidence="1">
    <location>
        <position position="299"/>
    </location>
</feature>
<feature type="modified residue" description="Phosphotyrosine" evidence="1">
    <location>
        <position position="307"/>
    </location>
</feature>
<name>PBL36_ARATH</name>
<proteinExistence type="evidence at protein level"/>
<accession>F4J0D2</accession>
<accession>A0A178VMS8</accession>
<accession>A0A1S5M0M9</accession>
<accession>B3LFC3</accession>
<evidence type="ECO:0000250" key="1">
    <source>
        <dbReference type="UniProtKB" id="O48814"/>
    </source>
</evidence>
<evidence type="ECO:0000250" key="2">
    <source>
        <dbReference type="UniProtKB" id="Q9LFP7"/>
    </source>
</evidence>
<evidence type="ECO:0000255" key="3">
    <source>
        <dbReference type="PROSITE-ProRule" id="PRU00159"/>
    </source>
</evidence>
<evidence type="ECO:0000256" key="4">
    <source>
        <dbReference type="SAM" id="MobiDB-lite"/>
    </source>
</evidence>
<evidence type="ECO:0000269" key="5">
    <source>
    </source>
</evidence>
<evidence type="ECO:0000269" key="6">
    <source>
    </source>
</evidence>
<evidence type="ECO:0000303" key="7">
    <source>
    </source>
</evidence>
<evidence type="ECO:0000305" key="8"/>
<evidence type="ECO:0000312" key="9">
    <source>
        <dbReference type="EMBL" id="AEE77476.2"/>
    </source>
</evidence>